<reference key="1">
    <citation type="journal article" date="1993" name="J. Mol. Biol.">
        <title>The gene locus of the proton-translocating NADH: ubiquinone oxidoreductase in Escherichia coli. Organization of the 14 genes and relationship between the derived proteins and subunits of mitochondrial complex I.</title>
        <authorList>
            <person name="Weidner U."/>
            <person name="Geier S."/>
            <person name="Ptock A."/>
            <person name="Friedrich T."/>
            <person name="Leif H."/>
            <person name="Weiss H."/>
        </authorList>
    </citation>
    <scope>NUCLEOTIDE SEQUENCE [GENOMIC DNA]</scope>
    <source>
        <strain>K12 / AN387</strain>
    </source>
</reference>
<reference key="2">
    <citation type="journal article" date="1997" name="DNA Res.">
        <title>Construction of a contiguous 874-kb sequence of the Escherichia coli-K12 genome corresponding to 50.0-68.8 min on the linkage map and analysis of its sequence features.</title>
        <authorList>
            <person name="Yamamoto Y."/>
            <person name="Aiba H."/>
            <person name="Baba T."/>
            <person name="Hayashi K."/>
            <person name="Inada T."/>
            <person name="Isono K."/>
            <person name="Itoh T."/>
            <person name="Kimura S."/>
            <person name="Kitagawa M."/>
            <person name="Makino K."/>
            <person name="Miki T."/>
            <person name="Mitsuhashi N."/>
            <person name="Mizobuchi K."/>
            <person name="Mori H."/>
            <person name="Nakade S."/>
            <person name="Nakamura Y."/>
            <person name="Nashimoto H."/>
            <person name="Oshima T."/>
            <person name="Oyama S."/>
            <person name="Saito N."/>
            <person name="Sampei G."/>
            <person name="Satoh Y."/>
            <person name="Sivasundaram S."/>
            <person name="Tagami H."/>
            <person name="Takahashi H."/>
            <person name="Takeda J."/>
            <person name="Takemoto K."/>
            <person name="Uehara K."/>
            <person name="Wada C."/>
            <person name="Yamagata S."/>
            <person name="Horiuchi T."/>
        </authorList>
    </citation>
    <scope>NUCLEOTIDE SEQUENCE [LARGE SCALE GENOMIC DNA]</scope>
    <source>
        <strain>K12 / W3110 / ATCC 27325 / DSM 5911</strain>
    </source>
</reference>
<reference key="3">
    <citation type="journal article" date="1997" name="Science">
        <title>The complete genome sequence of Escherichia coli K-12.</title>
        <authorList>
            <person name="Blattner F.R."/>
            <person name="Plunkett G. III"/>
            <person name="Bloch C.A."/>
            <person name="Perna N.T."/>
            <person name="Burland V."/>
            <person name="Riley M."/>
            <person name="Collado-Vides J."/>
            <person name="Glasner J.D."/>
            <person name="Rode C.K."/>
            <person name="Mayhew G.F."/>
            <person name="Gregor J."/>
            <person name="Davis N.W."/>
            <person name="Kirkpatrick H.A."/>
            <person name="Goeden M.A."/>
            <person name="Rose D.J."/>
            <person name="Mau B."/>
            <person name="Shao Y."/>
        </authorList>
    </citation>
    <scope>NUCLEOTIDE SEQUENCE [LARGE SCALE GENOMIC DNA]</scope>
    <source>
        <strain>K12 / MG1655 / ATCC 47076</strain>
    </source>
</reference>
<reference key="4">
    <citation type="journal article" date="2006" name="Mol. Syst. Biol.">
        <title>Highly accurate genome sequences of Escherichia coli K-12 strains MG1655 and W3110.</title>
        <authorList>
            <person name="Hayashi K."/>
            <person name="Morooka N."/>
            <person name="Yamamoto Y."/>
            <person name="Fujita K."/>
            <person name="Isono K."/>
            <person name="Choi S."/>
            <person name="Ohtsubo E."/>
            <person name="Baba T."/>
            <person name="Wanner B.L."/>
            <person name="Mori H."/>
            <person name="Horiuchi T."/>
        </authorList>
    </citation>
    <scope>NUCLEOTIDE SEQUENCE [LARGE SCALE GENOMIC DNA]</scope>
    <source>
        <strain>K12 / W3110 / ATCC 27325 / DSM 5911</strain>
    </source>
</reference>
<reference key="5">
    <citation type="journal article" date="1997" name="Electrophoresis">
        <title>Comparing the predicted and observed properties of proteins encoded in the genome of Escherichia coli K-12.</title>
        <authorList>
            <person name="Link A.J."/>
            <person name="Robison K."/>
            <person name="Church G.M."/>
        </authorList>
    </citation>
    <scope>PROTEIN SEQUENCE OF 1-12</scope>
    <source>
        <strain>K12 / EMG2</strain>
    </source>
</reference>
<reference key="6">
    <citation type="journal article" date="1995" name="Eur. J. Biochem.">
        <title>Isolation and characterization of the proton-translocating NADH: ubiquinone oxidoreductase from Escherichia coli.</title>
        <authorList>
            <person name="Leif H."/>
            <person name="Sled V.D."/>
            <person name="Ohnishi T."/>
            <person name="Weiss H."/>
            <person name="Friedrich T."/>
        </authorList>
    </citation>
    <scope>PROTEIN SEQUENCE OF 1-4</scope>
    <source>
        <strain>K12 / MG1655 / ATCC 47076</strain>
    </source>
</reference>
<comment type="function">
    <text>NDH-1 shuttles electrons from NADH, via FMN and iron-sulfur (Fe-S) centers, to quinones in the respiratory chain. The immediate electron acceptor for the enzyme in this species is believed to be ubiquinone. Couples the redox reaction to proton translocation (for every two electrons transferred, four hydrogen ions are translocated across the cytoplasmic membrane), and thus conserves the redox energy in a proton gradient.</text>
</comment>
<comment type="catalytic activity">
    <reaction>
        <text>a quinone + NADH + 5 H(+)(in) = a quinol + NAD(+) + 4 H(+)(out)</text>
        <dbReference type="Rhea" id="RHEA:57888"/>
        <dbReference type="ChEBI" id="CHEBI:15378"/>
        <dbReference type="ChEBI" id="CHEBI:24646"/>
        <dbReference type="ChEBI" id="CHEBI:57540"/>
        <dbReference type="ChEBI" id="CHEBI:57945"/>
        <dbReference type="ChEBI" id="CHEBI:132124"/>
    </reaction>
</comment>
<comment type="cofactor">
    <cofactor evidence="1">
        <name>[4Fe-4S] cluster</name>
        <dbReference type="ChEBI" id="CHEBI:49883"/>
    </cofactor>
    <text evidence="1">Binds 2 [4Fe-4S] clusters per subunit.</text>
</comment>
<comment type="subunit">
    <text evidence="1">NDH-1 is composed of 13 different subunits. Subunits NuoA, H, J, K, L, M, N constitute the membrane sector of the complex (By similarity).</text>
</comment>
<comment type="subcellular location">
    <subcellularLocation>
        <location evidence="2">Cell inner membrane</location>
        <topology evidence="2">Peripheral membrane protein</topology>
    </subcellularLocation>
</comment>
<comment type="similarity">
    <text evidence="2">Belongs to the complex I 23 kDa subunit family.</text>
</comment>
<gene>
    <name type="primary">nuoI</name>
    <name type="ordered locus">b2281</name>
    <name type="ordered locus">JW2276</name>
</gene>
<dbReference type="EC" id="7.1.1.-"/>
<dbReference type="EMBL" id="X68301">
    <property type="protein sequence ID" value="CAA48368.1"/>
    <property type="molecule type" value="Genomic_DNA"/>
</dbReference>
<dbReference type="EMBL" id="U00096">
    <property type="protein sequence ID" value="AAC75341.1"/>
    <property type="molecule type" value="Genomic_DNA"/>
</dbReference>
<dbReference type="EMBL" id="AP009048">
    <property type="protein sequence ID" value="BAA16109.2"/>
    <property type="molecule type" value="Genomic_DNA"/>
</dbReference>
<dbReference type="PIR" id="G64999">
    <property type="entry name" value="G64999"/>
</dbReference>
<dbReference type="RefSeq" id="NP_416784.1">
    <property type="nucleotide sequence ID" value="NC_000913.3"/>
</dbReference>
<dbReference type="RefSeq" id="WP_000172749.1">
    <property type="nucleotide sequence ID" value="NZ_STEB01000008.1"/>
</dbReference>
<dbReference type="PDB" id="7AWT">
    <property type="method" value="EM"/>
    <property type="resolution" value="2.73 A"/>
    <property type="chains" value="I=1-180"/>
</dbReference>
<dbReference type="PDB" id="7NYR">
    <property type="method" value="EM"/>
    <property type="resolution" value="3.30 A"/>
    <property type="chains" value="I=1-180"/>
</dbReference>
<dbReference type="PDB" id="7NYU">
    <property type="method" value="EM"/>
    <property type="resolution" value="3.80 A"/>
    <property type="chains" value="I=1-180"/>
</dbReference>
<dbReference type="PDB" id="7NYV">
    <property type="method" value="EM"/>
    <property type="resolution" value="3.70 A"/>
    <property type="chains" value="I=1-180"/>
</dbReference>
<dbReference type="PDB" id="7NZ1">
    <property type="method" value="EM"/>
    <property type="resolution" value="2.10 A"/>
    <property type="chains" value="I=1-180"/>
</dbReference>
<dbReference type="PDB" id="7P61">
    <property type="method" value="EM"/>
    <property type="resolution" value="3.20 A"/>
    <property type="chains" value="I=34-180"/>
</dbReference>
<dbReference type="PDB" id="7P62">
    <property type="method" value="EM"/>
    <property type="resolution" value="3.60 A"/>
    <property type="chains" value="I=37-180"/>
</dbReference>
<dbReference type="PDB" id="7P63">
    <property type="method" value="EM"/>
    <property type="resolution" value="3.40 A"/>
    <property type="chains" value="I=1-180"/>
</dbReference>
<dbReference type="PDB" id="7P64">
    <property type="method" value="EM"/>
    <property type="resolution" value="2.50 A"/>
    <property type="chains" value="I=1-180"/>
</dbReference>
<dbReference type="PDB" id="7P69">
    <property type="method" value="EM"/>
    <property type="resolution" value="3.00 A"/>
    <property type="chains" value="I=36-180"/>
</dbReference>
<dbReference type="PDB" id="7P7C">
    <property type="method" value="EM"/>
    <property type="resolution" value="2.40 A"/>
    <property type="chains" value="I=1-180"/>
</dbReference>
<dbReference type="PDB" id="7P7E">
    <property type="method" value="EM"/>
    <property type="resolution" value="2.70 A"/>
    <property type="chains" value="I=36-180"/>
</dbReference>
<dbReference type="PDB" id="7P7J">
    <property type="method" value="EM"/>
    <property type="resolution" value="2.70 A"/>
    <property type="chains" value="I=1-180"/>
</dbReference>
<dbReference type="PDB" id="7P7K">
    <property type="method" value="EM"/>
    <property type="resolution" value="3.10 A"/>
    <property type="chains" value="I=32-180"/>
</dbReference>
<dbReference type="PDB" id="7P7L">
    <property type="method" value="EM"/>
    <property type="resolution" value="3.00 A"/>
    <property type="chains" value="I=1-180"/>
</dbReference>
<dbReference type="PDB" id="7P7M">
    <property type="method" value="EM"/>
    <property type="resolution" value="3.20 A"/>
    <property type="chains" value="I=1-180"/>
</dbReference>
<dbReference type="PDB" id="7Z7R">
    <property type="method" value="EM"/>
    <property type="resolution" value="3.36 A"/>
    <property type="chains" value="I=1-180"/>
</dbReference>
<dbReference type="PDB" id="7Z7S">
    <property type="method" value="EM"/>
    <property type="resolution" value="2.40 A"/>
    <property type="chains" value="I=1-180"/>
</dbReference>
<dbReference type="PDB" id="7Z7T">
    <property type="method" value="EM"/>
    <property type="resolution" value="3.10 A"/>
    <property type="chains" value="I=1-180"/>
</dbReference>
<dbReference type="PDB" id="7Z7V">
    <property type="method" value="EM"/>
    <property type="resolution" value="2.29 A"/>
    <property type="chains" value="I=1-180"/>
</dbReference>
<dbReference type="PDB" id="7Z80">
    <property type="method" value="EM"/>
    <property type="resolution" value="2.93 A"/>
    <property type="chains" value="I=1-180"/>
</dbReference>
<dbReference type="PDB" id="7Z83">
    <property type="method" value="EM"/>
    <property type="resolution" value="2.88 A"/>
    <property type="chains" value="I=1-180"/>
</dbReference>
<dbReference type="PDB" id="7Z84">
    <property type="method" value="EM"/>
    <property type="resolution" value="2.87 A"/>
    <property type="chains" value="I=1-180"/>
</dbReference>
<dbReference type="PDB" id="7ZC5">
    <property type="method" value="EM"/>
    <property type="resolution" value="3.00 A"/>
    <property type="chains" value="I=1-180"/>
</dbReference>
<dbReference type="PDB" id="7ZCI">
    <property type="method" value="EM"/>
    <property type="resolution" value="2.69 A"/>
    <property type="chains" value="I=1-180"/>
</dbReference>
<dbReference type="PDBsum" id="7AWT"/>
<dbReference type="PDBsum" id="7NYR"/>
<dbReference type="PDBsum" id="7NYU"/>
<dbReference type="PDBsum" id="7NYV"/>
<dbReference type="PDBsum" id="7NZ1"/>
<dbReference type="PDBsum" id="7P61"/>
<dbReference type="PDBsum" id="7P62"/>
<dbReference type="PDBsum" id="7P63"/>
<dbReference type="PDBsum" id="7P64"/>
<dbReference type="PDBsum" id="7P69"/>
<dbReference type="PDBsum" id="7P7C"/>
<dbReference type="PDBsum" id="7P7E"/>
<dbReference type="PDBsum" id="7P7J"/>
<dbReference type="PDBsum" id="7P7K"/>
<dbReference type="PDBsum" id="7P7L"/>
<dbReference type="PDBsum" id="7P7M"/>
<dbReference type="PDBsum" id="7Z7R"/>
<dbReference type="PDBsum" id="7Z7S"/>
<dbReference type="PDBsum" id="7Z7T"/>
<dbReference type="PDBsum" id="7Z7V"/>
<dbReference type="PDBsum" id="7Z80"/>
<dbReference type="PDBsum" id="7Z83"/>
<dbReference type="PDBsum" id="7Z84"/>
<dbReference type="PDBsum" id="7ZC5"/>
<dbReference type="PDBsum" id="7ZCI"/>
<dbReference type="SMR" id="P0AFD6"/>
<dbReference type="BioGRID" id="4260510">
    <property type="interactions" value="86"/>
</dbReference>
<dbReference type="ComplexPortal" id="CPX-243">
    <property type="entry name" value="Respiratory chain complex I"/>
</dbReference>
<dbReference type="DIP" id="DIP-35918N"/>
<dbReference type="FunCoup" id="P0AFD6">
    <property type="interactions" value="670"/>
</dbReference>
<dbReference type="IntAct" id="P0AFD6">
    <property type="interactions" value="8"/>
</dbReference>
<dbReference type="STRING" id="511145.b2281"/>
<dbReference type="TCDB" id="3.D.1.1.1">
    <property type="family name" value="the h+ or na+-translocating nadh dehydrogenase (ndh) family"/>
</dbReference>
<dbReference type="jPOST" id="P0AFD6"/>
<dbReference type="PaxDb" id="511145-b2281"/>
<dbReference type="EnsemblBacteria" id="AAC75341">
    <property type="protein sequence ID" value="AAC75341"/>
    <property type="gene ID" value="b2281"/>
</dbReference>
<dbReference type="GeneID" id="89517116"/>
<dbReference type="GeneID" id="946757"/>
<dbReference type="KEGG" id="ecj:JW2276"/>
<dbReference type="KEGG" id="eco:b2281"/>
<dbReference type="KEGG" id="ecoc:C3026_12730"/>
<dbReference type="PATRIC" id="fig|511145.12.peg.2374"/>
<dbReference type="EchoBASE" id="EB2013"/>
<dbReference type="eggNOG" id="COG1143">
    <property type="taxonomic scope" value="Bacteria"/>
</dbReference>
<dbReference type="HOGENOM" id="CLU_067218_4_3_6"/>
<dbReference type="InParanoid" id="P0AFD6"/>
<dbReference type="OMA" id="WYPDFFR"/>
<dbReference type="OrthoDB" id="9808559at2"/>
<dbReference type="PhylomeDB" id="P0AFD6"/>
<dbReference type="BioCyc" id="EcoCyc:NUOI-MONOMER"/>
<dbReference type="BioCyc" id="MetaCyc:NUOI-MONOMER"/>
<dbReference type="PRO" id="PR:P0AFD6"/>
<dbReference type="Proteomes" id="UP000000625">
    <property type="component" value="Chromosome"/>
</dbReference>
<dbReference type="GO" id="GO:0016020">
    <property type="term" value="C:membrane"/>
    <property type="evidence" value="ECO:0000314"/>
    <property type="project" value="ComplexPortal"/>
</dbReference>
<dbReference type="GO" id="GO:0030964">
    <property type="term" value="C:NADH dehydrogenase complex"/>
    <property type="evidence" value="ECO:0000314"/>
    <property type="project" value="EcoliWiki"/>
</dbReference>
<dbReference type="GO" id="GO:0005886">
    <property type="term" value="C:plasma membrane"/>
    <property type="evidence" value="ECO:0000314"/>
    <property type="project" value="EcoCyc"/>
</dbReference>
<dbReference type="GO" id="GO:0045271">
    <property type="term" value="C:respiratory chain complex I"/>
    <property type="evidence" value="ECO:0000314"/>
    <property type="project" value="EcoCyc"/>
</dbReference>
<dbReference type="GO" id="GO:0051539">
    <property type="term" value="F:4 iron, 4 sulfur cluster binding"/>
    <property type="evidence" value="ECO:0000314"/>
    <property type="project" value="EcoCyc"/>
</dbReference>
<dbReference type="GO" id="GO:0005506">
    <property type="term" value="F:iron ion binding"/>
    <property type="evidence" value="ECO:0007669"/>
    <property type="project" value="UniProtKB-UniRule"/>
</dbReference>
<dbReference type="GO" id="GO:0050136">
    <property type="term" value="F:NADH:ubiquinone reductase (non-electrogenic) activity"/>
    <property type="evidence" value="ECO:0007669"/>
    <property type="project" value="UniProtKB-UniRule"/>
</dbReference>
<dbReference type="GO" id="GO:0048038">
    <property type="term" value="F:quinone binding"/>
    <property type="evidence" value="ECO:0007669"/>
    <property type="project" value="UniProtKB-KW"/>
</dbReference>
<dbReference type="GO" id="GO:0009060">
    <property type="term" value="P:aerobic respiration"/>
    <property type="evidence" value="ECO:0000315"/>
    <property type="project" value="EcoCyc"/>
</dbReference>
<dbReference type="GO" id="GO:0022904">
    <property type="term" value="P:respiratory electron transport chain"/>
    <property type="evidence" value="ECO:0000314"/>
    <property type="project" value="ComplexPortal"/>
</dbReference>
<dbReference type="FunFam" id="3.30.70.3270:FF:000002">
    <property type="entry name" value="NADH-quinone oxidoreductase subunit I"/>
    <property type="match status" value="1"/>
</dbReference>
<dbReference type="Gene3D" id="3.30.70.3270">
    <property type="match status" value="1"/>
</dbReference>
<dbReference type="HAMAP" id="MF_01351">
    <property type="entry name" value="NDH1_NuoI"/>
    <property type="match status" value="1"/>
</dbReference>
<dbReference type="InterPro" id="IPR017896">
    <property type="entry name" value="4Fe4S_Fe-S-bd"/>
</dbReference>
<dbReference type="InterPro" id="IPR017900">
    <property type="entry name" value="4Fe4S_Fe_S_CS"/>
</dbReference>
<dbReference type="InterPro" id="IPR010226">
    <property type="entry name" value="NADH_quinone_OxRdtase_chainI"/>
</dbReference>
<dbReference type="NCBIfam" id="TIGR01971">
    <property type="entry name" value="NuoI"/>
    <property type="match status" value="1"/>
</dbReference>
<dbReference type="NCBIfam" id="NF004536">
    <property type="entry name" value="PRK05888.1-1"/>
    <property type="match status" value="1"/>
</dbReference>
<dbReference type="PANTHER" id="PTHR10849:SF20">
    <property type="entry name" value="NADH DEHYDROGENASE [UBIQUINONE] IRON-SULFUR PROTEIN 8, MITOCHONDRIAL"/>
    <property type="match status" value="1"/>
</dbReference>
<dbReference type="PANTHER" id="PTHR10849">
    <property type="entry name" value="NADH DEHYDROGENASE UBIQUINONE IRON-SULFUR PROTEIN 8, MITOCHONDRIAL"/>
    <property type="match status" value="1"/>
</dbReference>
<dbReference type="Pfam" id="PF12838">
    <property type="entry name" value="Fer4_7"/>
    <property type="match status" value="1"/>
</dbReference>
<dbReference type="SUPFAM" id="SSF54862">
    <property type="entry name" value="4Fe-4S ferredoxins"/>
    <property type="match status" value="1"/>
</dbReference>
<dbReference type="PROSITE" id="PS00198">
    <property type="entry name" value="4FE4S_FER_1"/>
    <property type="match status" value="2"/>
</dbReference>
<dbReference type="PROSITE" id="PS51379">
    <property type="entry name" value="4FE4S_FER_2"/>
    <property type="match status" value="2"/>
</dbReference>
<organism>
    <name type="scientific">Escherichia coli (strain K12)</name>
    <dbReference type="NCBI Taxonomy" id="83333"/>
    <lineage>
        <taxon>Bacteria</taxon>
        <taxon>Pseudomonadati</taxon>
        <taxon>Pseudomonadota</taxon>
        <taxon>Gammaproteobacteria</taxon>
        <taxon>Enterobacterales</taxon>
        <taxon>Enterobacteriaceae</taxon>
        <taxon>Escherichia</taxon>
    </lineage>
</organism>
<feature type="chain" id="PRO_0000118722" description="NADH-quinone oxidoreductase subunit I">
    <location>
        <begin position="1"/>
        <end position="180"/>
    </location>
</feature>
<feature type="domain" description="4Fe-4S ferredoxin-type 1">
    <location>
        <begin position="50"/>
        <end position="80"/>
    </location>
</feature>
<feature type="domain" description="4Fe-4S ferredoxin-type 2">
    <location>
        <begin position="90"/>
        <end position="119"/>
    </location>
</feature>
<feature type="binding site" evidence="1">
    <location>
        <position position="60"/>
    </location>
    <ligand>
        <name>[4Fe-4S] cluster</name>
        <dbReference type="ChEBI" id="CHEBI:49883"/>
        <label>1</label>
    </ligand>
</feature>
<feature type="binding site" evidence="1">
    <location>
        <position position="63"/>
    </location>
    <ligand>
        <name>[4Fe-4S] cluster</name>
        <dbReference type="ChEBI" id="CHEBI:49883"/>
        <label>1</label>
    </ligand>
</feature>
<feature type="binding site" evidence="1">
    <location>
        <position position="66"/>
    </location>
    <ligand>
        <name>[4Fe-4S] cluster</name>
        <dbReference type="ChEBI" id="CHEBI:49883"/>
        <label>1</label>
    </ligand>
</feature>
<feature type="binding site" evidence="1">
    <location>
        <position position="70"/>
    </location>
    <ligand>
        <name>[4Fe-4S] cluster</name>
        <dbReference type="ChEBI" id="CHEBI:49883"/>
        <label>2</label>
    </ligand>
</feature>
<feature type="binding site" evidence="1">
    <location>
        <position position="99"/>
    </location>
    <ligand>
        <name>[4Fe-4S] cluster</name>
        <dbReference type="ChEBI" id="CHEBI:49883"/>
        <label>2</label>
    </ligand>
</feature>
<feature type="binding site" evidence="1">
    <location>
        <position position="102"/>
    </location>
    <ligand>
        <name>[4Fe-4S] cluster</name>
        <dbReference type="ChEBI" id="CHEBI:49883"/>
        <label>2</label>
    </ligand>
</feature>
<feature type="binding site" evidence="1">
    <location>
        <position position="105"/>
    </location>
    <ligand>
        <name>[4Fe-4S] cluster</name>
        <dbReference type="ChEBI" id="CHEBI:49883"/>
        <label>2</label>
    </ligand>
</feature>
<feature type="binding site" evidence="1">
    <location>
        <position position="109"/>
    </location>
    <ligand>
        <name>[4Fe-4S] cluster</name>
        <dbReference type="ChEBI" id="CHEBI:49883"/>
        <label>1</label>
    </ligand>
</feature>
<feature type="sequence conflict" description="In Ref. 1; CAA48368." evidence="2" ref="1">
    <original>AFAKRE</original>
    <variation>GSPNQ</variation>
    <location>
        <begin position="24"/>
        <end position="29"/>
    </location>
</feature>
<feature type="sequence conflict" description="In Ref. 1; CAA48368." evidence="2" ref="1">
    <original>EAENEAKPIDV</original>
    <variation>DRRTKPSLSTF</variation>
    <location>
        <begin position="165"/>
        <end position="175"/>
    </location>
</feature>
<feature type="helix" evidence="6">
    <location>
        <begin position="3"/>
        <end position="24"/>
    </location>
</feature>
<feature type="turn" evidence="6">
    <location>
        <begin position="33"/>
        <end position="35"/>
    </location>
</feature>
<feature type="strand" evidence="4">
    <location>
        <begin position="48"/>
        <end position="50"/>
    </location>
</feature>
<feature type="strand" evidence="4">
    <location>
        <begin position="56"/>
        <end position="58"/>
    </location>
</feature>
<feature type="helix" evidence="4">
    <location>
        <begin position="65"/>
        <end position="69"/>
    </location>
</feature>
<feature type="strand" evidence="4">
    <location>
        <begin position="75"/>
        <end position="81"/>
    </location>
</feature>
<feature type="strand" evidence="3">
    <location>
        <begin position="83"/>
        <end position="85"/>
    </location>
</feature>
<feature type="strand" evidence="4">
    <location>
        <begin position="87"/>
        <end position="95"/>
    </location>
</feature>
<feature type="turn" evidence="4">
    <location>
        <begin position="96"/>
        <end position="98"/>
    </location>
</feature>
<feature type="helix" evidence="4">
    <location>
        <begin position="104"/>
        <end position="108"/>
    </location>
</feature>
<feature type="strand" evidence="4">
    <location>
        <begin position="110"/>
        <end position="112"/>
    </location>
</feature>
<feature type="strand" evidence="4">
    <location>
        <begin position="114"/>
        <end position="116"/>
    </location>
</feature>
<feature type="strand" evidence="6">
    <location>
        <begin position="124"/>
        <end position="126"/>
    </location>
</feature>
<feature type="helix" evidence="4">
    <location>
        <begin position="127"/>
        <end position="130"/>
    </location>
</feature>
<feature type="helix" evidence="4">
    <location>
        <begin position="134"/>
        <end position="137"/>
    </location>
</feature>
<feature type="helix" evidence="4">
    <location>
        <begin position="150"/>
        <end position="153"/>
    </location>
</feature>
<feature type="strand" evidence="5">
    <location>
        <begin position="154"/>
        <end position="156"/>
    </location>
</feature>
<proteinExistence type="evidence at protein level"/>
<evidence type="ECO:0000250" key="1"/>
<evidence type="ECO:0000305" key="2"/>
<evidence type="ECO:0007829" key="3">
    <source>
        <dbReference type="PDB" id="7AWT"/>
    </source>
</evidence>
<evidence type="ECO:0007829" key="4">
    <source>
        <dbReference type="PDB" id="7NZ1"/>
    </source>
</evidence>
<evidence type="ECO:0007829" key="5">
    <source>
        <dbReference type="PDB" id="7P7J"/>
    </source>
</evidence>
<evidence type="ECO:0007829" key="6">
    <source>
        <dbReference type="PDB" id="7Z7V"/>
    </source>
</evidence>
<accession>P0AFD6</accession>
<accession>P33604</accession>
<accession>P76488</accession>
<accession>P78183</accession>
<name>NUOI_ECOLI</name>
<keyword id="KW-0002">3D-structure</keyword>
<keyword id="KW-0004">4Fe-4S</keyword>
<keyword id="KW-0997">Cell inner membrane</keyword>
<keyword id="KW-1003">Cell membrane</keyword>
<keyword id="KW-0903">Direct protein sequencing</keyword>
<keyword id="KW-0408">Iron</keyword>
<keyword id="KW-0411">Iron-sulfur</keyword>
<keyword id="KW-0472">Membrane</keyword>
<keyword id="KW-0479">Metal-binding</keyword>
<keyword id="KW-0520">NAD</keyword>
<keyword id="KW-0874">Quinone</keyword>
<keyword id="KW-1185">Reference proteome</keyword>
<keyword id="KW-0677">Repeat</keyword>
<keyword id="KW-1278">Translocase</keyword>
<keyword id="KW-0830">Ubiquinone</keyword>
<protein>
    <recommendedName>
        <fullName>NADH-quinone oxidoreductase subunit I</fullName>
        <ecNumber>7.1.1.-</ecNumber>
    </recommendedName>
    <alternativeName>
        <fullName>NADH dehydrogenase I subunit I</fullName>
    </alternativeName>
    <alternativeName>
        <fullName>NDH-1 subunit I</fullName>
    </alternativeName>
    <alternativeName>
        <fullName>NUO9</fullName>
    </alternativeName>
</protein>
<sequence length="180" mass="20538">MTLKELLVGFGTQVRSIWMIGLHAFAKRETRMYPEEPVYLPPRYRGRIVLTRDPDGEERCVACNLCAVACPVGCISLQKAETKDGRWYPEFFRINFSRCIFCGLCEEACPTTAIQLTPDFEMGEYKRQDLVYEKEDLLISGPGKYPEYNFYRMAGMAIDGKDKGEAENEAKPIDVKSLLP</sequence>